<feature type="chain" id="PRO_0000270113" description="N-acetyl-D-glucosamine kinase">
    <location>
        <begin position="1"/>
        <end position="302"/>
    </location>
</feature>
<feature type="binding site" evidence="1">
    <location>
        <begin position="4"/>
        <end position="11"/>
    </location>
    <ligand>
        <name>ATP</name>
        <dbReference type="ChEBI" id="CHEBI:30616"/>
    </ligand>
</feature>
<feature type="binding site" evidence="1">
    <location>
        <begin position="133"/>
        <end position="139"/>
    </location>
    <ligand>
        <name>ATP</name>
        <dbReference type="ChEBI" id="CHEBI:30616"/>
    </ligand>
</feature>
<feature type="binding site" evidence="1">
    <location>
        <position position="156"/>
    </location>
    <ligand>
        <name>Zn(2+)</name>
        <dbReference type="ChEBI" id="CHEBI:29105"/>
    </ligand>
</feature>
<feature type="binding site" evidence="1">
    <location>
        <position position="176"/>
    </location>
    <ligand>
        <name>Zn(2+)</name>
        <dbReference type="ChEBI" id="CHEBI:29105"/>
    </ligand>
</feature>
<feature type="binding site" evidence="1">
    <location>
        <position position="178"/>
    </location>
    <ligand>
        <name>Zn(2+)</name>
        <dbReference type="ChEBI" id="CHEBI:29105"/>
    </ligand>
</feature>
<feature type="binding site" evidence="1">
    <location>
        <position position="183"/>
    </location>
    <ligand>
        <name>Zn(2+)</name>
        <dbReference type="ChEBI" id="CHEBI:29105"/>
    </ligand>
</feature>
<accession>Q8Z7H9</accession>
<accession>Q7C9E0</accession>
<reference key="1">
    <citation type="journal article" date="2001" name="Nature">
        <title>Complete genome sequence of a multiple drug resistant Salmonella enterica serovar Typhi CT18.</title>
        <authorList>
            <person name="Parkhill J."/>
            <person name="Dougan G."/>
            <person name="James K.D."/>
            <person name="Thomson N.R."/>
            <person name="Pickard D."/>
            <person name="Wain J."/>
            <person name="Churcher C.M."/>
            <person name="Mungall K.L."/>
            <person name="Bentley S.D."/>
            <person name="Holden M.T.G."/>
            <person name="Sebaihia M."/>
            <person name="Baker S."/>
            <person name="Basham D."/>
            <person name="Brooks K."/>
            <person name="Chillingworth T."/>
            <person name="Connerton P."/>
            <person name="Cronin A."/>
            <person name="Davis P."/>
            <person name="Davies R.M."/>
            <person name="Dowd L."/>
            <person name="White N."/>
            <person name="Farrar J."/>
            <person name="Feltwell T."/>
            <person name="Hamlin N."/>
            <person name="Haque A."/>
            <person name="Hien T.T."/>
            <person name="Holroyd S."/>
            <person name="Jagels K."/>
            <person name="Krogh A."/>
            <person name="Larsen T.S."/>
            <person name="Leather S."/>
            <person name="Moule S."/>
            <person name="O'Gaora P."/>
            <person name="Parry C."/>
            <person name="Quail M.A."/>
            <person name="Rutherford K.M."/>
            <person name="Simmonds M."/>
            <person name="Skelton J."/>
            <person name="Stevens K."/>
            <person name="Whitehead S."/>
            <person name="Barrell B.G."/>
        </authorList>
    </citation>
    <scope>NUCLEOTIDE SEQUENCE [LARGE SCALE GENOMIC DNA]</scope>
    <source>
        <strain>CT18</strain>
    </source>
</reference>
<reference key="2">
    <citation type="journal article" date="2003" name="J. Bacteriol.">
        <title>Comparative genomics of Salmonella enterica serovar Typhi strains Ty2 and CT18.</title>
        <authorList>
            <person name="Deng W."/>
            <person name="Liou S.-R."/>
            <person name="Plunkett G. III"/>
            <person name="Mayhew G.F."/>
            <person name="Rose D.J."/>
            <person name="Burland V."/>
            <person name="Kodoyianni V."/>
            <person name="Schwartz D.C."/>
            <person name="Blattner F.R."/>
        </authorList>
    </citation>
    <scope>NUCLEOTIDE SEQUENCE [LARGE SCALE GENOMIC DNA]</scope>
    <source>
        <strain>ATCC 700931 / Ty2</strain>
    </source>
</reference>
<keyword id="KW-0067">ATP-binding</keyword>
<keyword id="KW-0119">Carbohydrate metabolism</keyword>
<keyword id="KW-0418">Kinase</keyword>
<keyword id="KW-0479">Metal-binding</keyword>
<keyword id="KW-0547">Nucleotide-binding</keyword>
<keyword id="KW-0808">Transferase</keyword>
<keyword id="KW-0862">Zinc</keyword>
<proteinExistence type="inferred from homology"/>
<sequence>MYYGFDIGGTKIALGVFDSTRRLQWEKRVPTPHTSYSAFLDAVCELVAEADQRFGVKGSVGIGIPGMPETEDGTLYAANVPAASGKPLRADLSARLDRDVRLDNDANCFALSEAWDDEFTQYPLVMGLILGTGGGGLVLNGKPITGQSYITGEFGHMRLPVDALTLMGFDFPLRRCGCGQMGCIENYLSGRGFAWLYQHYYDQSLQAPEIIALWEQGDEQAHAHVERYLDLLAVCLGNILTIVDPDLLVIGGGLSNFTAITTQLAERLPRHLLPVARAPRIERARHGDAGGMRGAAFLHLTD</sequence>
<comment type="function">
    <text evidence="1">Catalyzes the phosphorylation of N-acetyl-D-glucosamine (GlcNAc) derived from cell-wall degradation, yielding GlcNAc-6-P.</text>
</comment>
<comment type="catalytic activity">
    <reaction evidence="1">
        <text>N-acetyl-D-glucosamine + ATP = N-acetyl-D-glucosamine 6-phosphate + ADP + H(+)</text>
        <dbReference type="Rhea" id="RHEA:17417"/>
        <dbReference type="ChEBI" id="CHEBI:15378"/>
        <dbReference type="ChEBI" id="CHEBI:30616"/>
        <dbReference type="ChEBI" id="CHEBI:57513"/>
        <dbReference type="ChEBI" id="CHEBI:456216"/>
        <dbReference type="ChEBI" id="CHEBI:506227"/>
        <dbReference type="EC" id="2.7.1.59"/>
    </reaction>
</comment>
<comment type="pathway">
    <text evidence="1">Cell wall biogenesis; peptidoglycan recycling.</text>
</comment>
<comment type="similarity">
    <text evidence="1">Belongs to the ROK (NagC/XylR) family. NagK subfamily.</text>
</comment>
<name>NAGK_SALTI</name>
<gene>
    <name evidence="1" type="primary">nagK</name>
    <name type="ordered locus">STY1260</name>
    <name type="ordered locus">t1700</name>
</gene>
<organism>
    <name type="scientific">Salmonella typhi</name>
    <dbReference type="NCBI Taxonomy" id="90370"/>
    <lineage>
        <taxon>Bacteria</taxon>
        <taxon>Pseudomonadati</taxon>
        <taxon>Pseudomonadota</taxon>
        <taxon>Gammaproteobacteria</taxon>
        <taxon>Enterobacterales</taxon>
        <taxon>Enterobacteriaceae</taxon>
        <taxon>Salmonella</taxon>
    </lineage>
</organism>
<protein>
    <recommendedName>
        <fullName evidence="1">N-acetyl-D-glucosamine kinase</fullName>
        <ecNumber evidence="1">2.7.1.59</ecNumber>
    </recommendedName>
    <alternativeName>
        <fullName evidence="1">GlcNAc kinase</fullName>
    </alternativeName>
</protein>
<dbReference type="EC" id="2.7.1.59" evidence="1"/>
<dbReference type="EMBL" id="AL513382">
    <property type="protein sequence ID" value="CAD08344.1"/>
    <property type="molecule type" value="Genomic_DNA"/>
</dbReference>
<dbReference type="EMBL" id="AE014613">
    <property type="protein sequence ID" value="AAO69325.1"/>
    <property type="molecule type" value="Genomic_DNA"/>
</dbReference>
<dbReference type="RefSeq" id="NP_455712.1">
    <property type="nucleotide sequence ID" value="NC_003198.1"/>
</dbReference>
<dbReference type="RefSeq" id="WP_000291327.1">
    <property type="nucleotide sequence ID" value="NZ_WSUR01000030.1"/>
</dbReference>
<dbReference type="SMR" id="Q8Z7H9"/>
<dbReference type="STRING" id="220341.gene:17585224"/>
<dbReference type="KEGG" id="stt:t1700"/>
<dbReference type="KEGG" id="sty:STY1260"/>
<dbReference type="PATRIC" id="fig|220341.7.peg.1264"/>
<dbReference type="eggNOG" id="COG1940">
    <property type="taxonomic scope" value="Bacteria"/>
</dbReference>
<dbReference type="HOGENOM" id="CLU_036604_0_3_6"/>
<dbReference type="OMA" id="VNVPGWR"/>
<dbReference type="OrthoDB" id="9810372at2"/>
<dbReference type="UniPathway" id="UPA00544"/>
<dbReference type="Proteomes" id="UP000000541">
    <property type="component" value="Chromosome"/>
</dbReference>
<dbReference type="Proteomes" id="UP000002670">
    <property type="component" value="Chromosome"/>
</dbReference>
<dbReference type="GO" id="GO:0005524">
    <property type="term" value="F:ATP binding"/>
    <property type="evidence" value="ECO:0007669"/>
    <property type="project" value="UniProtKB-UniRule"/>
</dbReference>
<dbReference type="GO" id="GO:0045127">
    <property type="term" value="F:N-acetylglucosamine kinase activity"/>
    <property type="evidence" value="ECO:0007669"/>
    <property type="project" value="UniProtKB-UniRule"/>
</dbReference>
<dbReference type="GO" id="GO:0008270">
    <property type="term" value="F:zinc ion binding"/>
    <property type="evidence" value="ECO:0007669"/>
    <property type="project" value="UniProtKB-UniRule"/>
</dbReference>
<dbReference type="GO" id="GO:0006044">
    <property type="term" value="P:N-acetylglucosamine metabolic process"/>
    <property type="evidence" value="ECO:0007669"/>
    <property type="project" value="UniProtKB-UniRule"/>
</dbReference>
<dbReference type="GO" id="GO:0009254">
    <property type="term" value="P:peptidoglycan turnover"/>
    <property type="evidence" value="ECO:0007669"/>
    <property type="project" value="UniProtKB-UniRule"/>
</dbReference>
<dbReference type="CDD" id="cd24057">
    <property type="entry name" value="ASKHA_NBD_ROK_NAGK"/>
    <property type="match status" value="1"/>
</dbReference>
<dbReference type="FunFam" id="3.30.420.40:FF:000049">
    <property type="entry name" value="N-acetyl-D-glucosamine kinase"/>
    <property type="match status" value="1"/>
</dbReference>
<dbReference type="FunFam" id="3.30.420.40:FF:000051">
    <property type="entry name" value="N-acetyl-D-glucosamine kinase"/>
    <property type="match status" value="1"/>
</dbReference>
<dbReference type="Gene3D" id="3.30.420.40">
    <property type="match status" value="2"/>
</dbReference>
<dbReference type="HAMAP" id="MF_01271">
    <property type="entry name" value="GlcNAc_kinase"/>
    <property type="match status" value="1"/>
</dbReference>
<dbReference type="InterPro" id="IPR043129">
    <property type="entry name" value="ATPase_NBD"/>
</dbReference>
<dbReference type="InterPro" id="IPR023505">
    <property type="entry name" value="N-acetyl-D-glucosamine_kinase"/>
</dbReference>
<dbReference type="InterPro" id="IPR000600">
    <property type="entry name" value="ROK"/>
</dbReference>
<dbReference type="NCBIfam" id="NF009835">
    <property type="entry name" value="PRK13310.1"/>
    <property type="match status" value="1"/>
</dbReference>
<dbReference type="PANTHER" id="PTHR18964:SF162">
    <property type="entry name" value="N-ACETYL-D-GLUCOSAMINE KINASE"/>
    <property type="match status" value="1"/>
</dbReference>
<dbReference type="PANTHER" id="PTHR18964">
    <property type="entry name" value="ROK (REPRESSOR, ORF, KINASE) FAMILY"/>
    <property type="match status" value="1"/>
</dbReference>
<dbReference type="Pfam" id="PF00480">
    <property type="entry name" value="ROK"/>
    <property type="match status" value="1"/>
</dbReference>
<dbReference type="SUPFAM" id="SSF53067">
    <property type="entry name" value="Actin-like ATPase domain"/>
    <property type="match status" value="1"/>
</dbReference>
<evidence type="ECO:0000255" key="1">
    <source>
        <dbReference type="HAMAP-Rule" id="MF_01271"/>
    </source>
</evidence>